<organismHost>
    <name type="scientific">Acanthamoeba polyphaga</name>
    <name type="common">Amoeba</name>
    <dbReference type="NCBI Taxonomy" id="5757"/>
</organismHost>
<proteinExistence type="predicted"/>
<sequence>MDFHKIFIEAEKNLVQGFKIKIQNETSMNRNKFLKLFLATFLGEQYFDELDSDNFNDICHDVIDSISLCGEEIYFFHEIVNLHDTHDYVAECINKYQSINNLDKCQLGGSILKCLKASSHLKIL</sequence>
<name>YR828_MIMIV</name>
<keyword id="KW-1185">Reference proteome</keyword>
<feature type="chain" id="PRO_0000071369" description="Uncharacterized protein R828">
    <location>
        <begin position="1"/>
        <end position="124"/>
    </location>
</feature>
<reference key="1">
    <citation type="journal article" date="2004" name="Science">
        <title>The 1.2-megabase genome sequence of Mimivirus.</title>
        <authorList>
            <person name="Raoult D."/>
            <person name="Audic S."/>
            <person name="Robert C."/>
            <person name="Abergel C."/>
            <person name="Renesto P."/>
            <person name="Ogata H."/>
            <person name="La Scola B."/>
            <person name="Susan M."/>
            <person name="Claverie J.-M."/>
        </authorList>
    </citation>
    <scope>NUCLEOTIDE SEQUENCE [LARGE SCALE GENOMIC DNA]</scope>
    <source>
        <strain>Rowbotham-Bradford</strain>
    </source>
</reference>
<gene>
    <name type="ordered locus">MIMI_R828</name>
</gene>
<protein>
    <recommendedName>
        <fullName>Uncharacterized protein R828</fullName>
    </recommendedName>
</protein>
<organism>
    <name type="scientific">Acanthamoeba polyphaga mimivirus</name>
    <name type="common">APMV</name>
    <dbReference type="NCBI Taxonomy" id="212035"/>
    <lineage>
        <taxon>Viruses</taxon>
        <taxon>Varidnaviria</taxon>
        <taxon>Bamfordvirae</taxon>
        <taxon>Nucleocytoviricota</taxon>
        <taxon>Megaviricetes</taxon>
        <taxon>Imitervirales</taxon>
        <taxon>Mimiviridae</taxon>
        <taxon>Megamimivirinae</taxon>
        <taxon>Mimivirus</taxon>
        <taxon>Mimivirus bradfordmassiliense</taxon>
    </lineage>
</organism>
<dbReference type="EMBL" id="AY653733">
    <property type="protein sequence ID" value="AAV51087.1"/>
    <property type="molecule type" value="Genomic_DNA"/>
</dbReference>
<dbReference type="KEGG" id="vg:9925491"/>
<dbReference type="OrthoDB" id="37082at10239"/>
<dbReference type="Proteomes" id="UP000001134">
    <property type="component" value="Genome"/>
</dbReference>
<accession>Q5UP32</accession>